<organism>
    <name type="scientific">Anaeromyxobacter dehalogenans (strain 2CP-C)</name>
    <dbReference type="NCBI Taxonomy" id="290397"/>
    <lineage>
        <taxon>Bacteria</taxon>
        <taxon>Pseudomonadati</taxon>
        <taxon>Myxococcota</taxon>
        <taxon>Myxococcia</taxon>
        <taxon>Myxococcales</taxon>
        <taxon>Cystobacterineae</taxon>
        <taxon>Anaeromyxobacteraceae</taxon>
        <taxon>Anaeromyxobacter</taxon>
    </lineage>
</organism>
<proteinExistence type="inferred from homology"/>
<comment type="subunit">
    <text evidence="1">Part of the 50S ribosomal subunit.</text>
</comment>
<comment type="similarity">
    <text evidence="1">Belongs to the universal ribosomal protein uL30 family.</text>
</comment>
<gene>
    <name evidence="1" type="primary">rpmD</name>
    <name type="ordered locus">Adeh_1928</name>
</gene>
<dbReference type="EMBL" id="CP000251">
    <property type="protein sequence ID" value="ABC81699.1"/>
    <property type="molecule type" value="Genomic_DNA"/>
</dbReference>
<dbReference type="RefSeq" id="WP_011420982.1">
    <property type="nucleotide sequence ID" value="NC_007760.1"/>
</dbReference>
<dbReference type="SMR" id="Q2IJ67"/>
<dbReference type="STRING" id="290397.Adeh_1928"/>
<dbReference type="KEGG" id="ade:Adeh_1928"/>
<dbReference type="eggNOG" id="COG1841">
    <property type="taxonomic scope" value="Bacteria"/>
</dbReference>
<dbReference type="HOGENOM" id="CLU_131047_2_1_7"/>
<dbReference type="OrthoDB" id="9812790at2"/>
<dbReference type="Proteomes" id="UP000001935">
    <property type="component" value="Chromosome"/>
</dbReference>
<dbReference type="GO" id="GO:0015934">
    <property type="term" value="C:large ribosomal subunit"/>
    <property type="evidence" value="ECO:0007669"/>
    <property type="project" value="InterPro"/>
</dbReference>
<dbReference type="GO" id="GO:0003735">
    <property type="term" value="F:structural constituent of ribosome"/>
    <property type="evidence" value="ECO:0007669"/>
    <property type="project" value="InterPro"/>
</dbReference>
<dbReference type="GO" id="GO:0006412">
    <property type="term" value="P:translation"/>
    <property type="evidence" value="ECO:0007669"/>
    <property type="project" value="InterPro"/>
</dbReference>
<dbReference type="CDD" id="cd01658">
    <property type="entry name" value="Ribosomal_L30"/>
    <property type="match status" value="1"/>
</dbReference>
<dbReference type="Gene3D" id="3.30.1390.20">
    <property type="entry name" value="Ribosomal protein L30, ferredoxin-like fold domain"/>
    <property type="match status" value="1"/>
</dbReference>
<dbReference type="HAMAP" id="MF_01371_B">
    <property type="entry name" value="Ribosomal_uL30_B"/>
    <property type="match status" value="1"/>
</dbReference>
<dbReference type="InterPro" id="IPR036919">
    <property type="entry name" value="Ribo_uL30_ferredoxin-like_sf"/>
</dbReference>
<dbReference type="InterPro" id="IPR005996">
    <property type="entry name" value="Ribosomal_uL30_bac-type"/>
</dbReference>
<dbReference type="InterPro" id="IPR016082">
    <property type="entry name" value="Ribosomal_uL30_ferredoxin-like"/>
</dbReference>
<dbReference type="NCBIfam" id="TIGR01308">
    <property type="entry name" value="rpmD_bact"/>
    <property type="match status" value="1"/>
</dbReference>
<dbReference type="Pfam" id="PF00327">
    <property type="entry name" value="Ribosomal_L30"/>
    <property type="match status" value="1"/>
</dbReference>
<dbReference type="SUPFAM" id="SSF55129">
    <property type="entry name" value="Ribosomal protein L30p/L7e"/>
    <property type="match status" value="1"/>
</dbReference>
<feature type="chain" id="PRO_0000347072" description="Large ribosomal subunit protein uL30">
    <location>
        <begin position="1"/>
        <end position="76"/>
    </location>
</feature>
<protein>
    <recommendedName>
        <fullName evidence="1">Large ribosomal subunit protein uL30</fullName>
    </recommendedName>
    <alternativeName>
        <fullName evidence="2">50S ribosomal protein L30</fullName>
    </alternativeName>
</protein>
<sequence>MAAIKVKLVRGLAGCPWPHRVIVEGLGLKKRESTKLLPDTPQTLGMIAKVSYLVEWERVDAAPPPGRKARKAAARS</sequence>
<accession>Q2IJ67</accession>
<keyword id="KW-1185">Reference proteome</keyword>
<keyword id="KW-0687">Ribonucleoprotein</keyword>
<keyword id="KW-0689">Ribosomal protein</keyword>
<reference key="1">
    <citation type="submission" date="2006-01" db="EMBL/GenBank/DDBJ databases">
        <title>Complete sequence of Anaeromyxobacter dehalogenans 2CP-C.</title>
        <authorList>
            <person name="Copeland A."/>
            <person name="Lucas S."/>
            <person name="Lapidus A."/>
            <person name="Barry K."/>
            <person name="Detter J.C."/>
            <person name="Glavina T."/>
            <person name="Hammon N."/>
            <person name="Israni S."/>
            <person name="Pitluck S."/>
            <person name="Brettin T."/>
            <person name="Bruce D."/>
            <person name="Han C."/>
            <person name="Tapia R."/>
            <person name="Gilna P."/>
            <person name="Kiss H."/>
            <person name="Schmutz J."/>
            <person name="Larimer F."/>
            <person name="Land M."/>
            <person name="Kyrpides N."/>
            <person name="Anderson I."/>
            <person name="Sanford R.A."/>
            <person name="Ritalahti K.M."/>
            <person name="Thomas H.S."/>
            <person name="Kirby J.R."/>
            <person name="Zhulin I.B."/>
            <person name="Loeffler F.E."/>
            <person name="Richardson P."/>
        </authorList>
    </citation>
    <scope>NUCLEOTIDE SEQUENCE [LARGE SCALE GENOMIC DNA]</scope>
    <source>
        <strain>2CP-C</strain>
    </source>
</reference>
<evidence type="ECO:0000255" key="1">
    <source>
        <dbReference type="HAMAP-Rule" id="MF_01371"/>
    </source>
</evidence>
<evidence type="ECO:0000305" key="2"/>
<name>RL30_ANADE</name>